<sequence length="860" mass="97318">MYSGAGPVLASPAPTTSPIPGYAFKPPPRPDFGTTGRTIKLQANFFEMDIPKIDIYHYELDIKPEKCPRRVNREIVEHMVQHFKTQIFGDRKPVFDGRKNLYTAMPLPIGRDKVELEVTLPGEGKDRIFKVSIKWVSCVSLQALHDALSGRLPSVPFETIQALDVVMRHLPSMRYTPVGRSFFTASEGCSNPLGGGREVWFGFHQSVRPSLWKMMLNIDVSATAFYKAQPVIEFVCEVLDFKSIEEQQKPLTDSQRVKFTKEIKGLKVEITHCGQMKRKYRVCNVTRRPASHQTFPLQQESGQTVECTVAQYFKDRHKLVLRYPHLPCLQVGQEQKHTYLPLEVCNIVAGQRCIKKLTDNQTSTMIRATARSAPDRQEEISKLMRSASFNTDPYVREFGIMVKDEMTDVTGRVLQPPSILYGGRNKAIATPVQGVWDMRNKQFHTGIEIKVWAIACFAPQRQCTEVHLKSFTEQLRKISRDAGMPIQGQPCFCKYAQGADSVEPMFRHLKNTYAGLQLVVVILPGKTPVYAEVKRVGDTVLGMATQCVQMKNVQRTTPQTLSNLCLKINVKLGGVNNILLPQGRPPVFQQPVIFLGADVTHPPAGDGKKPSIAAVVGSMDAHPNRYCATVRVQQHRQEIIQDLAAMVRELLIQFYKSTRFKPTRIIFYRDGVSEGQFQQVLHHELLAIREACIKLEKEYQPGITFIVVQKRHHTRLFCTDKNERVGKSGNIPAGTTVDTKITHPTEFDFYLCSHAGIQGTSRPSHYHVLWDDNRFSSDELQILTYQLCHTYVRCTRSVSIPAPAYYAHLVAFRARYHLVDKEHDSAEGSHTSGQSNGRDHQALAKAVQVHQDTLRTMYFA</sequence>
<comment type="function">
    <text evidence="5">Required for RNA-mediated gene silencing (RNAi) by the RNA-induced silencing complex (RISC). The 'minimal RISC' appears to include AGO2 bound to a short guide RNA such as a microRNA (miRNA) or short interfering RNA (siRNA). These guide RNAs direct RISC to complementary mRNAs that are targets for RISC-mediated gene silencing. The precise mechanism of gene silencing depends on the degree of complementarity between the miRNA or siRNA and its target. Binding of RISC to a perfectly complementary mRNA generally results in silencing due to endonucleolytic cleavage of the mRNA specifically by AGO2. Binding of RISC to a partially complementary mRNA results in silencing through inhibition of translation, and this is independent of endonuclease activity. May inhibit translation initiation by binding to the 7-methylguanosine cap, thereby preventing the recruitment of the translation initiation factor eIF4-E. May also inhibit translation initiation via interaction with EIF6, which itself binds to the 60S ribosomal subunit and prevents its association with the 40S ribosomal subunit. The inhibition of translational initiation leads to the accumulation of the affected mRNA in cytoplasmic processing bodies (P-bodies), where mRNA degradation may subsequently occur. In some cases RISC-mediated translational repression is also observed for miRNAs that perfectly match the 3' untranslated region (3'-UTR). Can also up-regulate the translation of specific mRNAs under certain growth conditions. Binds to the AU element of the 3'-UTR of the TNF (TNF-alpha) mRNA and up-regulates translation under conditions of serum starvation. Also required for transcriptional gene silencing (TGS), in which short RNAs known as antigene RNAs or agRNAs direct the transcriptional repression of complementary promoter regions.</text>
</comment>
<comment type="catalytic activity">
    <reaction evidence="5">
        <text>Endonucleolytic cleavage to 5'-phosphomonoester.</text>
        <dbReference type="EC" id="3.1.26.n2"/>
    </reaction>
</comment>
<comment type="cofactor">
    <cofactor evidence="1">
        <name>Mg(2+)</name>
        <dbReference type="ChEBI" id="CHEBI:18420"/>
    </cofactor>
    <cofactor evidence="1">
        <name>Mn(2+)</name>
        <dbReference type="ChEBI" id="CHEBI:29035"/>
    </cofactor>
</comment>
<comment type="subunit">
    <text evidence="2 3 5 7">Interacts with DICER1 through its Piwi domain and with TARBP2 during assembly of the RNA-induced silencing complex (RISC). Together, DICER1, AGO2 and TARBP2 constitute the trimeric RISC loading complex (RLC), or micro-RNA (miRNA) loading complex (miRLC). Within the RLC/miRLC, DICER1 and TARBP2 are required to process precursor miRNAs (pre-miRNAs) to mature miRNAs and then load them onto AGO2. AGO2 bound to the mature miRNA constitutes the minimal RISC and may subsequently dissociate from DICER1 and TARBP2. Note however that the term RISC has also been used to describe the trimeric RLC/miRLC. The formation of RISC complexes containing siRNAs rather than miRNAs appears to occur independently of DICER1. Interacts with AGO1. Also interacts with DDB1, DDX5, DDX6, DDX20, DHX30, DHX36, DDX47, DHX9, ELAVL, FXR1, GEMIN4, HNRNPF, IGF2BP1, ILF3, IMP8, MATR3, PABPC1, PRMT5, P4HA1, P4HB, RBM4, SART3, TNRC6A, TNRC6B, UPF1 and YBX1. Interacts with the P-body components DCP1A and XRN1. Associates with polysomes and messenger ribonucleoproteins (mNRPs). Interacts with RBM4; the interaction is modulated under stress-induced conditions, occurs under both cell proliferation and differentiation conditions and in an RNA- and phosphorylation-independent manner. Interacts with LIMD1, WTIP and AJUBA. Interacts with TRIM71; the interaction increases in presence of RNA. Interacts with APOBEC3G in an RNA-dependent manner. Interacts with APOBEC3A, APOBEC3C, APOBEC3F and APOBEC3H. Interacts with DICER1, TARBP2, EIF6, MOV10 and RPL7A (60S ribosome subunit); they form a large RNA-induced silencing complex (RISC). Interacts with FMR1. Interacts with ZFP36. Interacts with RC3H1; the interaction is RNA independent (By similarity). Found in a complex, composed of AGO2, CHD7 and ARB2A (By similarity). Interacts with SND1 and SYT11 (PubMed:24882364). Interacts with CLNK (By similarity). Interacts with GARRE1 (By similarity). Interacts with GRB2; this interaction is important for the formation of a ternary complex containing GRB2, AGO2 and DICER1 (By similarity).</text>
</comment>
<comment type="subcellular location">
    <subcellularLocation>
        <location evidence="5">Cytoplasm</location>
        <location evidence="5">P-body</location>
    </subcellularLocation>
    <subcellularLocation>
        <location evidence="5">Nucleus</location>
    </subcellularLocation>
    <text evidence="5">Translational repression of mRNAs results in their recruitment to P-bodies. Translocation to the nucleus requires IMP8.</text>
</comment>
<comment type="domain">
    <text evidence="5">The Piwi domain may perform RNA cleavage by a mechanism similar to that of RNase H. However, while RNase H utilizes a triad of Asp-Asp-Glu (DDE) for metal ion coordination, this protein appears to utilize a triad of Asp-Asp-His (DDH).</text>
</comment>
<comment type="PTM">
    <text evidence="5">Hydroxylated. 4-hydroxylation appears to enhance protein stability but is not required for miRNA-binding or endonuclease activity.</text>
</comment>
<comment type="PTM">
    <text evidence="3">Ubiquitinated on surface-exposed lysines by a SCF-like E3 ubiquitin-protein ligase complex containing ZSWIM8 during target-directed microRNA degradation (TDMD), a process that mediates degradation of microRNAs (miRNAs). Ubiquitination by the SCF-like E3 ubiquitin-protein ligase complex containing ZSWIM8 leads to its subsequent degradation, thereby exposing miRNAs for degradation. ZSWIM8 recognizes and binds AGO2 when it is engaged with a TDMD target.</text>
</comment>
<comment type="PTM">
    <text evidence="3">Phosphorylation at Ser-388 by AKT3; leads to up-regulate translational repression of microRNA target and down-regulate endonucleolytic cleavage.</text>
</comment>
<comment type="PTM">
    <text evidence="3">A phosphorylation cycle of C-terminal serine cluster (Ser-825-Ser-835) regulates the release of target mRNAs. Target-binding leads to phosphorylation of these residues by CSNK1A1, which reduces the affinity of AGO2 for mRNA and enables target release. The ANKRD52-PPP6C phosphatase complex dephosphorylates the residues, which primes AGO2 for binding a new target.</text>
</comment>
<comment type="similarity">
    <text evidence="5">Belongs to the argonaute family. Ago subfamily.</text>
</comment>
<comment type="caution">
    <text evidence="9">Was originally thought to be membrane-associated.</text>
</comment>
<comment type="sequence caution" evidence="8">
    <conflict type="erroneous initiation">
        <sequence resource="EMBL-CDS" id="AAF12800"/>
    </conflict>
    <text>Extended N-terminus.</text>
</comment>
<feature type="chain" id="PRO_0000194060" description="Protein argonaute-2">
    <location>
        <begin position="1"/>
        <end position="860"/>
    </location>
</feature>
<feature type="domain" description="PAZ" evidence="6">
    <location>
        <begin position="230"/>
        <end position="349"/>
    </location>
</feature>
<feature type="domain" description="Piwi" evidence="5">
    <location>
        <begin position="518"/>
        <end position="819"/>
    </location>
</feature>
<feature type="region of interest" description="Interaction with guide RNA" evidence="1">
    <location>
        <begin position="312"/>
        <end position="317"/>
    </location>
</feature>
<feature type="region of interest" description="Interaction with guide RNA" evidence="1">
    <location>
        <begin position="525"/>
        <end position="567"/>
    </location>
</feature>
<feature type="region of interest" description="Interaction with GW182 family members" evidence="4">
    <location>
        <begin position="588"/>
        <end position="591"/>
    </location>
</feature>
<feature type="region of interest" description="Interaction with GW182 family members" evidence="4">
    <location>
        <begin position="651"/>
        <end position="661"/>
    </location>
</feature>
<feature type="region of interest" description="Interaction with guide RNA" evidence="1">
    <location>
        <begin position="710"/>
        <end position="711"/>
    </location>
</feature>
<feature type="region of interest" description="Interaction with guide RNA" evidence="1">
    <location>
        <begin position="754"/>
        <end position="762"/>
    </location>
</feature>
<feature type="region of interest" description="Interaction with guide RNA" evidence="1">
    <location>
        <begin position="791"/>
        <end position="813"/>
    </location>
</feature>
<feature type="binding site" evidence="5">
    <location>
        <position position="598"/>
    </location>
    <ligand>
        <name>a divalent metal cation</name>
        <dbReference type="ChEBI" id="CHEBI:60240"/>
    </ligand>
</feature>
<feature type="binding site" evidence="5">
    <location>
        <position position="670"/>
    </location>
    <ligand>
        <name>a divalent metal cation</name>
        <dbReference type="ChEBI" id="CHEBI:60240"/>
    </ligand>
</feature>
<feature type="binding site" evidence="5">
    <location>
        <position position="808"/>
    </location>
    <ligand>
        <name>a divalent metal cation</name>
        <dbReference type="ChEBI" id="CHEBI:60240"/>
    </ligand>
</feature>
<feature type="modified residue" description="3'-nitrotyrosine" evidence="2 5">
    <location>
        <position position="2"/>
    </location>
</feature>
<feature type="modified residue" description="Phosphoserine" evidence="3">
    <location>
        <position position="388"/>
    </location>
</feature>
<feature type="modified residue" description="4-hydroxyproline" evidence="5">
    <location>
        <position position="701"/>
    </location>
</feature>
<feature type="modified residue" description="Phosphoserine" evidence="3">
    <location>
        <position position="825"/>
    </location>
</feature>
<feature type="modified residue" description="Phosphoserine" evidence="3">
    <location>
        <position position="829"/>
    </location>
</feature>
<feature type="modified residue" description="Phosphoserine" evidence="3">
    <location>
        <position position="832"/>
    </location>
</feature>
<feature type="modified residue" description="Phosphoserine" evidence="3">
    <location>
        <position position="835"/>
    </location>
</feature>
<gene>
    <name type="primary">Ago2</name>
    <name type="synonym">Eif2c2</name>
</gene>
<name>AGO2_RAT</name>
<dbReference type="EC" id="3.1.26.n2" evidence="5"/>
<dbReference type="EMBL" id="AF195534">
    <property type="protein sequence ID" value="AAF12800.1"/>
    <property type="status" value="ALT_INIT"/>
    <property type="molecule type" value="mRNA"/>
</dbReference>
<dbReference type="RefSeq" id="NP_067608.1">
    <property type="nucleotide sequence ID" value="NM_021597.1"/>
</dbReference>
<dbReference type="SMR" id="Q9QZ81"/>
<dbReference type="BioGRID" id="248738">
    <property type="interactions" value="1"/>
</dbReference>
<dbReference type="FunCoup" id="Q9QZ81">
    <property type="interactions" value="3306"/>
</dbReference>
<dbReference type="IntAct" id="Q9QZ81">
    <property type="interactions" value="7"/>
</dbReference>
<dbReference type="MINT" id="Q9QZ81"/>
<dbReference type="STRING" id="10116.ENSRNOP00000011898"/>
<dbReference type="iPTMnet" id="Q9QZ81"/>
<dbReference type="PhosphoSitePlus" id="Q9QZ81"/>
<dbReference type="jPOST" id="Q9QZ81"/>
<dbReference type="PaxDb" id="10116-ENSRNOP00000011898"/>
<dbReference type="PeptideAtlas" id="Q9QZ81"/>
<dbReference type="UCSC" id="RGD:621255">
    <property type="organism name" value="rat"/>
</dbReference>
<dbReference type="AGR" id="RGD:621255"/>
<dbReference type="RGD" id="621255">
    <property type="gene designation" value="Ago2"/>
</dbReference>
<dbReference type="eggNOG" id="KOG1041">
    <property type="taxonomic scope" value="Eukaryota"/>
</dbReference>
<dbReference type="InParanoid" id="Q9QZ81"/>
<dbReference type="OrthoDB" id="10252740at2759"/>
<dbReference type="PhylomeDB" id="Q9QZ81"/>
<dbReference type="Reactome" id="R-RNO-203927">
    <property type="pathway name" value="MicroRNA (miRNA) biogenesis"/>
</dbReference>
<dbReference type="Reactome" id="R-RNO-426486">
    <property type="pathway name" value="Small interfering RNA (siRNA) biogenesis"/>
</dbReference>
<dbReference type="Reactome" id="R-RNO-426496">
    <property type="pathway name" value="Post-transcriptional silencing by small RNAs"/>
</dbReference>
<dbReference type="Reactome" id="R-RNO-5578749">
    <property type="pathway name" value="Transcriptional regulation by small RNAs"/>
</dbReference>
<dbReference type="PRO" id="PR:Q9QZ81"/>
<dbReference type="Proteomes" id="UP000002494">
    <property type="component" value="Unplaced"/>
</dbReference>
<dbReference type="GO" id="GO:0033391">
    <property type="term" value="C:chromatoid body"/>
    <property type="evidence" value="ECO:0000314"/>
    <property type="project" value="RGD"/>
</dbReference>
<dbReference type="GO" id="GO:0005737">
    <property type="term" value="C:cytoplasm"/>
    <property type="evidence" value="ECO:0000314"/>
    <property type="project" value="RGD"/>
</dbReference>
<dbReference type="GO" id="GO:0036464">
    <property type="term" value="C:cytoplasmic ribonucleoprotein granule"/>
    <property type="evidence" value="ECO:0000318"/>
    <property type="project" value="GO_Central"/>
</dbReference>
<dbReference type="GO" id="GO:0010494">
    <property type="term" value="C:cytoplasmic stress granule"/>
    <property type="evidence" value="ECO:0000314"/>
    <property type="project" value="RGD"/>
</dbReference>
<dbReference type="GO" id="GO:0005829">
    <property type="term" value="C:cytosol"/>
    <property type="evidence" value="ECO:0000314"/>
    <property type="project" value="RGD"/>
</dbReference>
<dbReference type="GO" id="GO:0030425">
    <property type="term" value="C:dendrite"/>
    <property type="evidence" value="ECO:0000314"/>
    <property type="project" value="RGD"/>
</dbReference>
<dbReference type="GO" id="GO:0070062">
    <property type="term" value="C:extracellular exosome"/>
    <property type="evidence" value="ECO:0000266"/>
    <property type="project" value="RGD"/>
</dbReference>
<dbReference type="GO" id="GO:0098978">
    <property type="term" value="C:glutamatergic synapse"/>
    <property type="evidence" value="ECO:0000266"/>
    <property type="project" value="RGD"/>
</dbReference>
<dbReference type="GO" id="GO:0005794">
    <property type="term" value="C:Golgi apparatus"/>
    <property type="evidence" value="ECO:0000314"/>
    <property type="project" value="RGD"/>
</dbReference>
<dbReference type="GO" id="GO:0016020">
    <property type="term" value="C:membrane"/>
    <property type="evidence" value="ECO:0000314"/>
    <property type="project" value="RGD"/>
</dbReference>
<dbReference type="GO" id="GO:0005739">
    <property type="term" value="C:mitochondrion"/>
    <property type="evidence" value="ECO:0000314"/>
    <property type="project" value="BHF-UCL"/>
</dbReference>
<dbReference type="GO" id="GO:0005634">
    <property type="term" value="C:nucleus"/>
    <property type="evidence" value="ECO:0000266"/>
    <property type="project" value="RGD"/>
</dbReference>
<dbReference type="GO" id="GO:0043186">
    <property type="term" value="C:P granule"/>
    <property type="evidence" value="ECO:0000314"/>
    <property type="project" value="RGD"/>
</dbReference>
<dbReference type="GO" id="GO:0000932">
    <property type="term" value="C:P-body"/>
    <property type="evidence" value="ECO:0000266"/>
    <property type="project" value="RGD"/>
</dbReference>
<dbReference type="GO" id="GO:0071546">
    <property type="term" value="C:pi-body"/>
    <property type="evidence" value="ECO:0000314"/>
    <property type="project" value="RGD"/>
</dbReference>
<dbReference type="GO" id="GO:0098794">
    <property type="term" value="C:postsynapse"/>
    <property type="evidence" value="ECO:0000266"/>
    <property type="project" value="RGD"/>
</dbReference>
<dbReference type="GO" id="GO:1990904">
    <property type="term" value="C:ribonucleoprotein complex"/>
    <property type="evidence" value="ECO:0000314"/>
    <property type="project" value="RGD"/>
</dbReference>
<dbReference type="GO" id="GO:0016442">
    <property type="term" value="C:RISC complex"/>
    <property type="evidence" value="ECO:0000314"/>
    <property type="project" value="RGD"/>
</dbReference>
<dbReference type="GO" id="GO:0070578">
    <property type="term" value="C:RISC-loading complex"/>
    <property type="evidence" value="ECO:0000250"/>
    <property type="project" value="UniProtKB"/>
</dbReference>
<dbReference type="GO" id="GO:0001046">
    <property type="term" value="F:core promoter sequence-specific DNA binding"/>
    <property type="evidence" value="ECO:0000266"/>
    <property type="project" value="RGD"/>
</dbReference>
<dbReference type="GO" id="GO:0003725">
    <property type="term" value="F:double-stranded RNA binding"/>
    <property type="evidence" value="ECO:0000266"/>
    <property type="project" value="RGD"/>
</dbReference>
<dbReference type="GO" id="GO:0090624">
    <property type="term" value="F:endoribonuclease activity, cleaving miRNA-paired mRNA"/>
    <property type="evidence" value="ECO:0000266"/>
    <property type="project" value="RGD"/>
</dbReference>
<dbReference type="GO" id="GO:0070551">
    <property type="term" value="F:endoribonuclease activity, cleaving siRNA-paired mRNA"/>
    <property type="evidence" value="ECO:0000250"/>
    <property type="project" value="UniProtKB"/>
</dbReference>
<dbReference type="GO" id="GO:0030544">
    <property type="term" value="F:Hsp70 protein binding"/>
    <property type="evidence" value="ECO:0000314"/>
    <property type="project" value="RGD"/>
</dbReference>
<dbReference type="GO" id="GO:0051879">
    <property type="term" value="F:Hsp90 protein binding"/>
    <property type="evidence" value="ECO:0000314"/>
    <property type="project" value="RGD"/>
</dbReference>
<dbReference type="GO" id="GO:0046872">
    <property type="term" value="F:metal ion binding"/>
    <property type="evidence" value="ECO:0007669"/>
    <property type="project" value="UniProtKB-KW"/>
</dbReference>
<dbReference type="GO" id="GO:0035198">
    <property type="term" value="F:miRNA binding"/>
    <property type="evidence" value="ECO:0000266"/>
    <property type="project" value="RGD"/>
</dbReference>
<dbReference type="GO" id="GO:0035925">
    <property type="term" value="F:mRNA 3'-UTR AU-rich region binding"/>
    <property type="evidence" value="ECO:0000266"/>
    <property type="project" value="RGD"/>
</dbReference>
<dbReference type="GO" id="GO:0003729">
    <property type="term" value="F:mRNA binding"/>
    <property type="evidence" value="ECO:0000266"/>
    <property type="project" value="RGD"/>
</dbReference>
<dbReference type="GO" id="GO:0098808">
    <property type="term" value="F:mRNA cap binding"/>
    <property type="evidence" value="ECO:0000250"/>
    <property type="project" value="UniProtKB"/>
</dbReference>
<dbReference type="GO" id="GO:1905172">
    <property type="term" value="F:RISC complex binding"/>
    <property type="evidence" value="ECO:0000314"/>
    <property type="project" value="RGD"/>
</dbReference>
<dbReference type="GO" id="GO:0000340">
    <property type="term" value="F:RNA 7-methylguanosine cap binding"/>
    <property type="evidence" value="ECO:0000250"/>
    <property type="project" value="UniProtKB"/>
</dbReference>
<dbReference type="GO" id="GO:0003723">
    <property type="term" value="F:RNA binding"/>
    <property type="evidence" value="ECO:0000266"/>
    <property type="project" value="RGD"/>
</dbReference>
<dbReference type="GO" id="GO:0004521">
    <property type="term" value="F:RNA endonuclease activity"/>
    <property type="evidence" value="ECO:0000266"/>
    <property type="project" value="RGD"/>
</dbReference>
<dbReference type="GO" id="GO:0000993">
    <property type="term" value="F:RNA polymerase II complex binding"/>
    <property type="evidence" value="ECO:0000266"/>
    <property type="project" value="RGD"/>
</dbReference>
<dbReference type="GO" id="GO:0003727">
    <property type="term" value="F:single-stranded RNA binding"/>
    <property type="evidence" value="ECO:0000266"/>
    <property type="project" value="RGD"/>
</dbReference>
<dbReference type="GO" id="GO:0035197">
    <property type="term" value="F:siRNA binding"/>
    <property type="evidence" value="ECO:0000250"/>
    <property type="project" value="UniProtKB"/>
</dbReference>
<dbReference type="GO" id="GO:0030154">
    <property type="term" value="P:cell differentiation"/>
    <property type="evidence" value="ECO:0000303"/>
    <property type="project" value="RGD"/>
</dbReference>
<dbReference type="GO" id="GO:0071277">
    <property type="term" value="P:cellular response to calcium ion"/>
    <property type="evidence" value="ECO:0000270"/>
    <property type="project" value="RGD"/>
</dbReference>
<dbReference type="GO" id="GO:0010586">
    <property type="term" value="P:miRNA metabolic process"/>
    <property type="evidence" value="ECO:0000266"/>
    <property type="project" value="RGD"/>
</dbReference>
<dbReference type="GO" id="GO:0035196">
    <property type="term" value="P:miRNA processing"/>
    <property type="evidence" value="ECO:0000266"/>
    <property type="project" value="RGD"/>
</dbReference>
<dbReference type="GO" id="GO:0035278">
    <property type="term" value="P:miRNA-mediated gene silencing by inhibition of translation"/>
    <property type="evidence" value="ECO:0000250"/>
    <property type="project" value="UniProtKB"/>
</dbReference>
<dbReference type="GO" id="GO:0035279">
    <property type="term" value="P:miRNA-mediated gene silencing by mRNA destabilization"/>
    <property type="evidence" value="ECO:0000250"/>
    <property type="project" value="UniProtKB"/>
</dbReference>
<dbReference type="GO" id="GO:0042985">
    <property type="term" value="P:negative regulation of amyloid precursor protein biosynthetic process"/>
    <property type="evidence" value="ECO:0000315"/>
    <property type="project" value="ARUK-UCL"/>
</dbReference>
<dbReference type="GO" id="GO:0045947">
    <property type="term" value="P:negative regulation of translational initiation"/>
    <property type="evidence" value="ECO:0000250"/>
    <property type="project" value="UniProtKB"/>
</dbReference>
<dbReference type="GO" id="GO:0033962">
    <property type="term" value="P:P-body assembly"/>
    <property type="evidence" value="ECO:0000266"/>
    <property type="project" value="RGD"/>
</dbReference>
<dbReference type="GO" id="GO:0045766">
    <property type="term" value="P:positive regulation of angiogenesis"/>
    <property type="evidence" value="ECO:0000266"/>
    <property type="project" value="RGD"/>
</dbReference>
<dbReference type="GO" id="GO:0010628">
    <property type="term" value="P:positive regulation of gene expression"/>
    <property type="evidence" value="ECO:0000266"/>
    <property type="project" value="RGD"/>
</dbReference>
<dbReference type="GO" id="GO:1900153">
    <property type="term" value="P:positive regulation of nuclear-transcribed mRNA catabolic process, deadenylation-dependent decay"/>
    <property type="evidence" value="ECO:0000250"/>
    <property type="project" value="UniProtKB"/>
</dbReference>
<dbReference type="GO" id="GO:0060213">
    <property type="term" value="P:positive regulation of nuclear-transcribed mRNA poly(A) tail shortening"/>
    <property type="evidence" value="ECO:0000250"/>
    <property type="project" value="UniProtKB"/>
</dbReference>
<dbReference type="GO" id="GO:1900370">
    <property type="term" value="P:positive regulation of post-transcriptional gene silencing by RNA"/>
    <property type="evidence" value="ECO:0000315"/>
    <property type="project" value="RGD"/>
</dbReference>
<dbReference type="GO" id="GO:0045944">
    <property type="term" value="P:positive regulation of transcription by RNA polymerase II"/>
    <property type="evidence" value="ECO:0000266"/>
    <property type="project" value="RGD"/>
</dbReference>
<dbReference type="GO" id="GO:0045727">
    <property type="term" value="P:positive regulation of translation"/>
    <property type="evidence" value="ECO:0000266"/>
    <property type="project" value="RGD"/>
</dbReference>
<dbReference type="GO" id="GO:1901165">
    <property type="term" value="P:positive regulation of trophoblast cell migration"/>
    <property type="evidence" value="ECO:0000266"/>
    <property type="project" value="RGD"/>
</dbReference>
<dbReference type="GO" id="GO:0009791">
    <property type="term" value="P:post-embryonic development"/>
    <property type="evidence" value="ECO:0000266"/>
    <property type="project" value="RGD"/>
</dbReference>
<dbReference type="GO" id="GO:0031054">
    <property type="term" value="P:pre-miRNA processing"/>
    <property type="evidence" value="ECO:0000250"/>
    <property type="project" value="UniProtKB"/>
</dbReference>
<dbReference type="GO" id="GO:0043488">
    <property type="term" value="P:regulation of mRNA stability"/>
    <property type="evidence" value="ECO:0000315"/>
    <property type="project" value="RGD"/>
</dbReference>
<dbReference type="GO" id="GO:0090128">
    <property type="term" value="P:regulation of synapse maturation"/>
    <property type="evidence" value="ECO:0000266"/>
    <property type="project" value="RGD"/>
</dbReference>
<dbReference type="GO" id="GO:0031047">
    <property type="term" value="P:regulatory ncRNA-mediated gene silencing"/>
    <property type="evidence" value="ECO:0000250"/>
    <property type="project" value="UniProtKB"/>
</dbReference>
<dbReference type="GO" id="GO:0035194">
    <property type="term" value="P:regulatory ncRNA-mediated post-transcriptional gene silencing"/>
    <property type="evidence" value="ECO:0000318"/>
    <property type="project" value="GO_Central"/>
</dbReference>
<dbReference type="GO" id="GO:0042220">
    <property type="term" value="P:response to cocaine"/>
    <property type="evidence" value="ECO:0000270"/>
    <property type="project" value="RGD"/>
</dbReference>
<dbReference type="GO" id="GO:0001666">
    <property type="term" value="P:response to hypoxia"/>
    <property type="evidence" value="ECO:0000270"/>
    <property type="project" value="RGD"/>
</dbReference>
<dbReference type="GO" id="GO:0043278">
    <property type="term" value="P:response to morphine"/>
    <property type="evidence" value="ECO:0000270"/>
    <property type="project" value="RGD"/>
</dbReference>
<dbReference type="GO" id="GO:0070922">
    <property type="term" value="P:RISC complex assembly"/>
    <property type="evidence" value="ECO:0000266"/>
    <property type="project" value="RGD"/>
</dbReference>
<dbReference type="GO" id="GO:0030422">
    <property type="term" value="P:siRNA processing"/>
    <property type="evidence" value="ECO:0000266"/>
    <property type="project" value="RGD"/>
</dbReference>
<dbReference type="GO" id="GO:0090625">
    <property type="term" value="P:siRNA-mediated gene silencing by mRNA destabilization"/>
    <property type="evidence" value="ECO:0000266"/>
    <property type="project" value="RGD"/>
</dbReference>
<dbReference type="GO" id="GO:0007283">
    <property type="term" value="P:spermatogenesis"/>
    <property type="evidence" value="ECO:0000270"/>
    <property type="project" value="RGD"/>
</dbReference>
<dbReference type="CDD" id="cd02846">
    <property type="entry name" value="PAZ_argonaute_like"/>
    <property type="match status" value="1"/>
</dbReference>
<dbReference type="CDD" id="cd04657">
    <property type="entry name" value="Piwi_ago-like"/>
    <property type="match status" value="1"/>
</dbReference>
<dbReference type="FunFam" id="2.170.260.10:FF:000001">
    <property type="entry name" value="Protein argonaute-2"/>
    <property type="match status" value="1"/>
</dbReference>
<dbReference type="FunFam" id="3.30.420.10:FF:000001">
    <property type="entry name" value="Protein argonaute-2"/>
    <property type="match status" value="1"/>
</dbReference>
<dbReference type="FunFam" id="3.40.50.2300:FF:000005">
    <property type="entry name" value="Protein argonaute-2"/>
    <property type="match status" value="1"/>
</dbReference>
<dbReference type="Gene3D" id="3.40.50.2300">
    <property type="match status" value="1"/>
</dbReference>
<dbReference type="Gene3D" id="2.170.260.10">
    <property type="entry name" value="paz domain"/>
    <property type="match status" value="1"/>
</dbReference>
<dbReference type="Gene3D" id="3.30.420.10">
    <property type="entry name" value="Ribonuclease H-like superfamily/Ribonuclease H"/>
    <property type="match status" value="1"/>
</dbReference>
<dbReference type="HAMAP" id="MF_03031">
    <property type="entry name" value="AGO2"/>
    <property type="match status" value="1"/>
</dbReference>
<dbReference type="InterPro" id="IPR028602">
    <property type="entry name" value="AGO2"/>
</dbReference>
<dbReference type="InterPro" id="IPR014811">
    <property type="entry name" value="ArgoL1"/>
</dbReference>
<dbReference type="InterPro" id="IPR032472">
    <property type="entry name" value="ArgoL2"/>
</dbReference>
<dbReference type="InterPro" id="IPR032473">
    <property type="entry name" value="Argonaute_Mid_dom"/>
</dbReference>
<dbReference type="InterPro" id="IPR032474">
    <property type="entry name" value="Argonaute_N"/>
</dbReference>
<dbReference type="InterPro" id="IPR003100">
    <property type="entry name" value="PAZ_dom"/>
</dbReference>
<dbReference type="InterPro" id="IPR036085">
    <property type="entry name" value="PAZ_dom_sf"/>
</dbReference>
<dbReference type="InterPro" id="IPR003165">
    <property type="entry name" value="Piwi"/>
</dbReference>
<dbReference type="InterPro" id="IPR045246">
    <property type="entry name" value="Piwi_ago-like"/>
</dbReference>
<dbReference type="InterPro" id="IPR012337">
    <property type="entry name" value="RNaseH-like_sf"/>
</dbReference>
<dbReference type="InterPro" id="IPR036397">
    <property type="entry name" value="RNaseH_sf"/>
</dbReference>
<dbReference type="PANTHER" id="PTHR22891">
    <property type="entry name" value="EUKARYOTIC TRANSLATION INITIATION FACTOR 2C"/>
    <property type="match status" value="1"/>
</dbReference>
<dbReference type="Pfam" id="PF08699">
    <property type="entry name" value="ArgoL1"/>
    <property type="match status" value="1"/>
</dbReference>
<dbReference type="Pfam" id="PF16488">
    <property type="entry name" value="ArgoL2"/>
    <property type="match status" value="1"/>
</dbReference>
<dbReference type="Pfam" id="PF16487">
    <property type="entry name" value="ArgoMid"/>
    <property type="match status" value="1"/>
</dbReference>
<dbReference type="Pfam" id="PF16486">
    <property type="entry name" value="ArgoN"/>
    <property type="match status" value="1"/>
</dbReference>
<dbReference type="Pfam" id="PF02170">
    <property type="entry name" value="PAZ"/>
    <property type="match status" value="1"/>
</dbReference>
<dbReference type="Pfam" id="PF02171">
    <property type="entry name" value="Piwi"/>
    <property type="match status" value="1"/>
</dbReference>
<dbReference type="SMART" id="SM01163">
    <property type="entry name" value="DUF1785"/>
    <property type="match status" value="1"/>
</dbReference>
<dbReference type="SMART" id="SM00949">
    <property type="entry name" value="PAZ"/>
    <property type="match status" value="1"/>
</dbReference>
<dbReference type="SMART" id="SM00950">
    <property type="entry name" value="Piwi"/>
    <property type="match status" value="1"/>
</dbReference>
<dbReference type="SUPFAM" id="SSF101690">
    <property type="entry name" value="PAZ domain"/>
    <property type="match status" value="1"/>
</dbReference>
<dbReference type="SUPFAM" id="SSF53098">
    <property type="entry name" value="Ribonuclease H-like"/>
    <property type="match status" value="1"/>
</dbReference>
<dbReference type="PROSITE" id="PS50821">
    <property type="entry name" value="PAZ"/>
    <property type="match status" value="1"/>
</dbReference>
<dbReference type="PROSITE" id="PS50822">
    <property type="entry name" value="PIWI"/>
    <property type="match status" value="1"/>
</dbReference>
<protein>
    <recommendedName>
        <fullName evidence="5">Protein argonaute-2</fullName>
        <shortName evidence="5">Argonaute2</shortName>
        <ecNumber evidence="5">3.1.26.n2</ecNumber>
    </recommendedName>
    <alternativeName>
        <fullName>Argonaute RISC catalytic component 2</fullName>
    </alternativeName>
    <alternativeName>
        <fullName evidence="5">Eukaryotic translation initiation factor 2C 2</fullName>
        <shortName evidence="5">eIF-2C 2</shortName>
        <shortName evidence="5">eIF2C 2</shortName>
    </alternativeName>
    <alternativeName>
        <fullName>Golgi ER protein 95 kDa</fullName>
        <shortName>GERp95</shortName>
    </alternativeName>
    <alternativeName>
        <fullName evidence="5">Protein slicer</fullName>
    </alternativeName>
</protein>
<accession>Q9QZ81</accession>
<proteinExistence type="evidence at protein level"/>
<organism>
    <name type="scientific">Rattus norvegicus</name>
    <name type="common">Rat</name>
    <dbReference type="NCBI Taxonomy" id="10116"/>
    <lineage>
        <taxon>Eukaryota</taxon>
        <taxon>Metazoa</taxon>
        <taxon>Chordata</taxon>
        <taxon>Craniata</taxon>
        <taxon>Vertebrata</taxon>
        <taxon>Euteleostomi</taxon>
        <taxon>Mammalia</taxon>
        <taxon>Eutheria</taxon>
        <taxon>Euarchontoglires</taxon>
        <taxon>Glires</taxon>
        <taxon>Rodentia</taxon>
        <taxon>Myomorpha</taxon>
        <taxon>Muroidea</taxon>
        <taxon>Muridae</taxon>
        <taxon>Murinae</taxon>
        <taxon>Rattus</taxon>
    </lineage>
</organism>
<keyword id="KW-0963">Cytoplasm</keyword>
<keyword id="KW-0255">Endonuclease</keyword>
<keyword id="KW-0378">Hydrolase</keyword>
<keyword id="KW-0379">Hydroxylation</keyword>
<keyword id="KW-0460">Magnesium</keyword>
<keyword id="KW-0464">Manganese</keyword>
<keyword id="KW-0479">Metal-binding</keyword>
<keyword id="KW-0944">Nitration</keyword>
<keyword id="KW-0540">Nuclease</keyword>
<keyword id="KW-0539">Nucleus</keyword>
<keyword id="KW-0597">Phosphoprotein</keyword>
<keyword id="KW-1185">Reference proteome</keyword>
<keyword id="KW-0678">Repressor</keyword>
<keyword id="KW-0687">Ribonucleoprotein</keyword>
<keyword id="KW-0694">RNA-binding</keyword>
<keyword id="KW-0943">RNA-mediated gene silencing</keyword>
<keyword id="KW-0804">Transcription</keyword>
<keyword id="KW-0805">Transcription regulation</keyword>
<keyword id="KW-0810">Translation regulation</keyword>
<keyword id="KW-0832">Ubl conjugation</keyword>
<reference key="1">
    <citation type="journal article" date="1999" name="Mol. Biol. Cell">
        <title>GERp95, a membrane-associated protein that belongs to a family of proteins involved in stem cell differentiation.</title>
        <authorList>
            <person name="Cikaluk D.E."/>
            <person name="Tahbaz N."/>
            <person name="Hendricks L.C."/>
            <person name="DiMattia G.E."/>
            <person name="Hansen D."/>
            <person name="Pilgrim D."/>
            <person name="Hobman T.C."/>
        </authorList>
    </citation>
    <scope>NUCLEOTIDE SEQUENCE [MRNA]</scope>
    <source>
        <strain>Sprague-Dawley</strain>
        <tissue>Hepatoma</tissue>
    </source>
</reference>
<reference key="2">
    <citation type="journal article" date="2014" name="FEBS Lett.">
        <title>Synaptotagmin 11 interacts with components of the RNA-induced silencing complex RISC in clonal pancreatic beta-cells.</title>
        <authorList>
            <person name="Milochau A."/>
            <person name="Lagree V."/>
            <person name="Benassy M.N."/>
            <person name="Chaignepain S."/>
            <person name="Papin J."/>
            <person name="Garcia-Arcos I."/>
            <person name="Lajoix A."/>
            <person name="Monterrat C."/>
            <person name="Coudert L."/>
            <person name="Schmitter J.M."/>
            <person name="Ochoa B."/>
            <person name="Lang J."/>
        </authorList>
    </citation>
    <scope>INTERACTION WITH AGO2 AND SND1</scope>
</reference>
<evidence type="ECO:0000250" key="1"/>
<evidence type="ECO:0000250" key="2">
    <source>
        <dbReference type="UniProtKB" id="Q8CJG0"/>
    </source>
</evidence>
<evidence type="ECO:0000250" key="3">
    <source>
        <dbReference type="UniProtKB" id="Q9UKV8"/>
    </source>
</evidence>
<evidence type="ECO:0000255" key="4"/>
<evidence type="ECO:0000255" key="5">
    <source>
        <dbReference type="HAMAP-Rule" id="MF_03031"/>
    </source>
</evidence>
<evidence type="ECO:0000255" key="6">
    <source>
        <dbReference type="PROSITE-ProRule" id="PRU00142"/>
    </source>
</evidence>
<evidence type="ECO:0000269" key="7">
    <source>
    </source>
</evidence>
<evidence type="ECO:0000305" key="8"/>
<evidence type="ECO:0000305" key="9">
    <source>
    </source>
</evidence>